<dbReference type="EMBL" id="CP001402">
    <property type="protein sequence ID" value="ACR42021.1"/>
    <property type="molecule type" value="Genomic_DNA"/>
</dbReference>
<dbReference type="SMR" id="C4KHF7"/>
<dbReference type="KEGG" id="sid:M164_1415"/>
<dbReference type="HOGENOM" id="CLU_026535_0_0_2"/>
<dbReference type="Proteomes" id="UP000001479">
    <property type="component" value="Chromosome"/>
</dbReference>
<dbReference type="GO" id="GO:1990904">
    <property type="term" value="C:ribonucleoprotein complex"/>
    <property type="evidence" value="ECO:0007669"/>
    <property type="project" value="UniProtKB-KW"/>
</dbReference>
<dbReference type="GO" id="GO:0005840">
    <property type="term" value="C:ribosome"/>
    <property type="evidence" value="ECO:0007669"/>
    <property type="project" value="UniProtKB-KW"/>
</dbReference>
<dbReference type="GO" id="GO:0019843">
    <property type="term" value="F:rRNA binding"/>
    <property type="evidence" value="ECO:0007669"/>
    <property type="project" value="UniProtKB-UniRule"/>
</dbReference>
<dbReference type="GO" id="GO:0003735">
    <property type="term" value="F:structural constituent of ribosome"/>
    <property type="evidence" value="ECO:0007669"/>
    <property type="project" value="InterPro"/>
</dbReference>
<dbReference type="GO" id="GO:0006412">
    <property type="term" value="P:translation"/>
    <property type="evidence" value="ECO:0007669"/>
    <property type="project" value="UniProtKB-UniRule"/>
</dbReference>
<dbReference type="FunFam" id="3.40.1370.10:FF:000011">
    <property type="entry name" value="50S ribosomal protein L4"/>
    <property type="match status" value="1"/>
</dbReference>
<dbReference type="Gene3D" id="3.40.1370.10">
    <property type="match status" value="1"/>
</dbReference>
<dbReference type="HAMAP" id="MF_01328_A">
    <property type="entry name" value="Ribosomal_uL4_A"/>
    <property type="match status" value="1"/>
</dbReference>
<dbReference type="InterPro" id="IPR002136">
    <property type="entry name" value="Ribosomal_uL4"/>
</dbReference>
<dbReference type="InterPro" id="IPR023574">
    <property type="entry name" value="Ribosomal_uL4_dom_sf"/>
</dbReference>
<dbReference type="InterPro" id="IPR013000">
    <property type="entry name" value="Ribosomal_uL4_euk/arc_CS"/>
</dbReference>
<dbReference type="InterPro" id="IPR045240">
    <property type="entry name" value="Ribosomal_uL4_euk/arch"/>
</dbReference>
<dbReference type="InterPro" id="IPR019970">
    <property type="entry name" value="Ribosomall_uL4-arc"/>
</dbReference>
<dbReference type="NCBIfam" id="TIGR03672">
    <property type="entry name" value="rpl4p_arch"/>
    <property type="match status" value="1"/>
</dbReference>
<dbReference type="PANTHER" id="PTHR19431">
    <property type="entry name" value="60S RIBOSOMAL PROTEIN L4"/>
    <property type="match status" value="1"/>
</dbReference>
<dbReference type="Pfam" id="PF00573">
    <property type="entry name" value="Ribosomal_L4"/>
    <property type="match status" value="1"/>
</dbReference>
<dbReference type="SUPFAM" id="SSF52166">
    <property type="entry name" value="Ribosomal protein L4"/>
    <property type="match status" value="1"/>
</dbReference>
<dbReference type="PROSITE" id="PS00939">
    <property type="entry name" value="RIBOSOMAL_L1E"/>
    <property type="match status" value="1"/>
</dbReference>
<name>RL4_SACI6</name>
<reference key="1">
    <citation type="journal article" date="2009" name="Proc. Natl. Acad. Sci. U.S.A.">
        <title>Biogeography of the Sulfolobus islandicus pan-genome.</title>
        <authorList>
            <person name="Reno M.L."/>
            <person name="Held N.L."/>
            <person name="Fields C.J."/>
            <person name="Burke P.V."/>
            <person name="Whitaker R.J."/>
        </authorList>
    </citation>
    <scope>NUCLEOTIDE SEQUENCE [LARGE SCALE GENOMIC DNA]</scope>
    <source>
        <strain>M.16.4 / Kamchatka #3</strain>
    </source>
</reference>
<sequence length="267" mass="29464">MYLELVKKNSVILDKDGNKVKEVELPFIFSFPVRKDIIRRVFLAEFTHSLQPKGRDPMAGKRTSAESFGINLGMARVPRVKNSGEAALAPNTVGGRLTFPPSVDKKLVEEVNDKEKQLAVISALSATADTVFVKARGHVFKDSVSFPIVVTDDIVSLKTASEVEEFLEKIGVYDDVKRVKERIRIRAGKGKMRGRKYKEPIGPLIIVHDSNSPIVKAARNIAGVDVVNAKDVSVIHLAPGAHPGRLTIYTETSIKILDERLSKRLVS</sequence>
<keyword id="KW-0687">Ribonucleoprotein</keyword>
<keyword id="KW-0689">Ribosomal protein</keyword>
<keyword id="KW-0694">RNA-binding</keyword>
<keyword id="KW-0699">rRNA-binding</keyword>
<feature type="chain" id="PRO_1000214585" description="Large ribosomal subunit protein uL4">
    <location>
        <begin position="1"/>
        <end position="267"/>
    </location>
</feature>
<evidence type="ECO:0000255" key="1">
    <source>
        <dbReference type="HAMAP-Rule" id="MF_01328"/>
    </source>
</evidence>
<evidence type="ECO:0000305" key="2"/>
<protein>
    <recommendedName>
        <fullName evidence="1">Large ribosomal subunit protein uL4</fullName>
    </recommendedName>
    <alternativeName>
        <fullName evidence="2">50S ribosomal protein L4</fullName>
    </alternativeName>
</protein>
<proteinExistence type="inferred from homology"/>
<gene>
    <name evidence="1" type="primary">rpl4</name>
    <name type="ordered locus">M164_1415</name>
</gene>
<organism>
    <name type="scientific">Saccharolobus islandicus (strain M.16.4 / Kamchatka #3)</name>
    <name type="common">Sulfolobus islandicus</name>
    <dbReference type="NCBI Taxonomy" id="426118"/>
    <lineage>
        <taxon>Archaea</taxon>
        <taxon>Thermoproteota</taxon>
        <taxon>Thermoprotei</taxon>
        <taxon>Sulfolobales</taxon>
        <taxon>Sulfolobaceae</taxon>
        <taxon>Saccharolobus</taxon>
    </lineage>
</organism>
<comment type="function">
    <text evidence="1">One of the primary rRNA binding proteins, this protein initially binds near the 5'-end of the 23S rRNA. It is important during the early stages of 50S assembly. It makes multiple contacts with different domains of the 23S rRNA in the assembled 50S subunit and ribosome.</text>
</comment>
<comment type="function">
    <text evidence="1">Forms part of the polypeptide exit tunnel.</text>
</comment>
<comment type="subunit">
    <text evidence="1">Part of the 50S ribosomal subunit.</text>
</comment>
<comment type="similarity">
    <text evidence="1">Belongs to the universal ribosomal protein uL4 family.</text>
</comment>
<accession>C4KHF7</accession>